<proteinExistence type="evidence at protein level"/>
<organism>
    <name type="scientific">Naja kaouthia</name>
    <name type="common">Monocled cobra</name>
    <name type="synonym">Naja siamensis</name>
    <dbReference type="NCBI Taxonomy" id="8649"/>
    <lineage>
        <taxon>Eukaryota</taxon>
        <taxon>Metazoa</taxon>
        <taxon>Chordata</taxon>
        <taxon>Craniata</taxon>
        <taxon>Vertebrata</taxon>
        <taxon>Euteleostomi</taxon>
        <taxon>Lepidosauria</taxon>
        <taxon>Squamata</taxon>
        <taxon>Bifurcata</taxon>
        <taxon>Unidentata</taxon>
        <taxon>Episquamata</taxon>
        <taxon>Toxicofera</taxon>
        <taxon>Serpentes</taxon>
        <taxon>Colubroidea</taxon>
        <taxon>Elapidae</taxon>
        <taxon>Elapinae</taxon>
        <taxon>Naja</taxon>
    </lineage>
</organism>
<accession>P82885</accession>
<sequence>SPPGNWQKADVTFDSNTAFESLVVSPDKKTVENVGVSQVAPDNPERFDGSPCVLGSPGFRSGKHFFEVKYGTQREWAVGLAGKSVKRKGYLRLVPEERIWQKGLWWLG</sequence>
<evidence type="ECO:0000250" key="1">
    <source>
        <dbReference type="UniProtKB" id="P83234"/>
    </source>
</evidence>
<evidence type="ECO:0000255" key="2">
    <source>
        <dbReference type="PROSITE-ProRule" id="PRU00548"/>
    </source>
</evidence>
<evidence type="ECO:0000269" key="3">
    <source ref="1"/>
</evidence>
<evidence type="ECO:0000303" key="4">
    <source ref="1"/>
</evidence>
<evidence type="ECO:0000305" key="5"/>
<evidence type="ECO:0000305" key="6">
    <source ref="1"/>
</evidence>
<reference key="1">
    <citation type="submission" date="2000-12" db="UniProtKB">
        <authorList>
            <person name="Utkin Y.N."/>
            <person name="Weise C."/>
            <person name="Kukhtina V.V."/>
            <person name="Tsetlin V.I."/>
        </authorList>
    </citation>
    <scope>PROTEIN SEQUENCE</scope>
    <scope>SUBCELLULAR LOCATION</scope>
    <source>
        <tissue>Venom</tissue>
    </source>
</reference>
<protein>
    <recommendedName>
        <fullName evidence="4">Thaicobrin</fullName>
    </recommendedName>
</protein>
<comment type="function">
    <text evidence="1">Neurotoxin that produces dose-dependent hypolocomotion and hyperalgesia in mice. May directly act on the central nervous system, as it is 6500-fold more potent when administered intracerebroventricularly than intraperitoneal.</text>
</comment>
<comment type="subcellular location">
    <subcellularLocation>
        <location evidence="3">Secreted</location>
    </subcellularLocation>
</comment>
<comment type="tissue specificity">
    <text evidence="6">Expressed by the venom gland.</text>
</comment>
<comment type="similarity">
    <text evidence="5">Belongs to the ohanin/vespryn family.</text>
</comment>
<name>VESP_NAJKA</name>
<dbReference type="SMR" id="P82885"/>
<dbReference type="TopDownProteomics" id="P82885"/>
<dbReference type="GO" id="GO:0005576">
    <property type="term" value="C:extracellular region"/>
    <property type="evidence" value="ECO:0007669"/>
    <property type="project" value="UniProtKB-SubCell"/>
</dbReference>
<dbReference type="GO" id="GO:0090729">
    <property type="term" value="F:toxin activity"/>
    <property type="evidence" value="ECO:0007669"/>
    <property type="project" value="UniProtKB-KW"/>
</dbReference>
<dbReference type="Gene3D" id="2.60.120.920">
    <property type="match status" value="1"/>
</dbReference>
<dbReference type="InterPro" id="IPR001870">
    <property type="entry name" value="B30.2/SPRY"/>
</dbReference>
<dbReference type="InterPro" id="IPR043136">
    <property type="entry name" value="B30.2/SPRY_sf"/>
</dbReference>
<dbReference type="InterPro" id="IPR003879">
    <property type="entry name" value="Butyrophylin_SPRY"/>
</dbReference>
<dbReference type="InterPro" id="IPR013320">
    <property type="entry name" value="ConA-like_dom_sf"/>
</dbReference>
<dbReference type="InterPro" id="IPR006574">
    <property type="entry name" value="PRY"/>
</dbReference>
<dbReference type="InterPro" id="IPR050143">
    <property type="entry name" value="TRIM/RBCC"/>
</dbReference>
<dbReference type="PANTHER" id="PTHR24103">
    <property type="entry name" value="E3 UBIQUITIN-PROTEIN LIGASE TRIM"/>
    <property type="match status" value="1"/>
</dbReference>
<dbReference type="Pfam" id="PF13765">
    <property type="entry name" value="PRY"/>
    <property type="match status" value="1"/>
</dbReference>
<dbReference type="PRINTS" id="PR01407">
    <property type="entry name" value="BUTYPHLNCDUF"/>
</dbReference>
<dbReference type="SMART" id="SM00589">
    <property type="entry name" value="PRY"/>
    <property type="match status" value="1"/>
</dbReference>
<dbReference type="SUPFAM" id="SSF49899">
    <property type="entry name" value="Concanavalin A-like lectins/glucanases"/>
    <property type="match status" value="1"/>
</dbReference>
<dbReference type="PROSITE" id="PS50188">
    <property type="entry name" value="B302_SPRY"/>
    <property type="match status" value="1"/>
</dbReference>
<keyword id="KW-0903">Direct protein sequencing</keyword>
<keyword id="KW-0528">Neurotoxin</keyword>
<keyword id="KW-0964">Secreted</keyword>
<keyword id="KW-0800">Toxin</keyword>
<feature type="chain" id="PRO_0000072511" description="Thaicobrin" evidence="3">
    <location>
        <begin position="1"/>
        <end position="108"/>
    </location>
</feature>
<feature type="domain" description="B30.2/SPRY" evidence="2">
    <location>
        <begin position="1"/>
        <end position="108"/>
    </location>
</feature>